<reference key="1">
    <citation type="journal article" date="2009" name="J. Bacteriol.">
        <title>Complete genome sequence of Erythrobacter litoralis HTCC2594.</title>
        <authorList>
            <person name="Oh H.M."/>
            <person name="Giovannoni S.J."/>
            <person name="Ferriera S."/>
            <person name="Johnson J."/>
            <person name="Cho J.C."/>
        </authorList>
    </citation>
    <scope>NUCLEOTIDE SEQUENCE [LARGE SCALE GENOMIC DNA]</scope>
    <source>
        <strain>HTCC2594</strain>
    </source>
</reference>
<gene>
    <name evidence="1" type="primary">dxs</name>
    <name type="ordered locus">ELI_12520</name>
</gene>
<proteinExistence type="inferred from homology"/>
<protein>
    <recommendedName>
        <fullName evidence="1">1-deoxy-D-xylulose-5-phosphate synthase</fullName>
        <ecNumber evidence="1">2.2.1.7</ecNumber>
    </recommendedName>
    <alternativeName>
        <fullName evidence="1">1-deoxyxylulose-5-phosphate synthase</fullName>
        <shortName evidence="1">DXP synthase</shortName>
        <shortName evidence="1">DXPS</shortName>
    </alternativeName>
</protein>
<sequence length="640" mass="68285">MSARPDTPLLDTVSYPEDLRKLEPGQLRQLSDELRAEMISAVGVTGGHLGSGLGVVELTAAIHYVFNTPEDRLIWDVGHQCYPHKILTGRRDRIRTLRQGGGLSGFTKRSESEYDPFGAAHSSTSISAGLGFAVANKLKGEPGKAIAVIGDGAMSAGMAYEAMNNAEQAGNRLIVILNDNDMSIAPPVGGLSGYLARLMSSSEYLGLRSLASRMTAKVSRRVHTSLGKAEEYTKGLVTGGTLFEELGFYYVGPIDGHNLDHLIPVLENVRDAEEGPFLIHVRTVKGKGYAPAENSADKYHGVAKFDVVTGEQKKSTGGPPAYQNVFGETLAKLADSDPRICAITAAMPSGTGVDKFAKAHPDRAFDVGIAEQHGVTFAAGLAAQGMRPFAAIYSTFLQRAYDQVVHDVAIQNLPVRFAIDRAGLVGADGSTHAGSFDVTYLATLPNFVVMAAADEAELVHMTYTAAEHDSGPIAFRYPRGGGIGIDLPETPEKLEIGKGRIVKHGSKVALLSLGTRLEEAKRAADELEAKGLSTTIADMRFAKPLDTELIAQLMKNHEVVVTIEEASIGGLGAHVLTYASDEGLTDAGLKIRTMRLPDAFIEQDAPEKQYDEAGLTAPHIVDTVLKALRQNSAGVEEARA</sequence>
<dbReference type="EC" id="2.2.1.7" evidence="1"/>
<dbReference type="EMBL" id="CP000157">
    <property type="protein sequence ID" value="ABC64596.1"/>
    <property type="molecule type" value="Genomic_DNA"/>
</dbReference>
<dbReference type="RefSeq" id="WP_011415418.1">
    <property type="nucleotide sequence ID" value="NC_007722.1"/>
</dbReference>
<dbReference type="SMR" id="Q2N6U5"/>
<dbReference type="STRING" id="314225.ELI_12520"/>
<dbReference type="KEGG" id="eli:ELI_12520"/>
<dbReference type="eggNOG" id="COG1154">
    <property type="taxonomic scope" value="Bacteria"/>
</dbReference>
<dbReference type="HOGENOM" id="CLU_009227_1_4_5"/>
<dbReference type="OrthoDB" id="9803371at2"/>
<dbReference type="UniPathway" id="UPA00064">
    <property type="reaction ID" value="UER00091"/>
</dbReference>
<dbReference type="Proteomes" id="UP000008808">
    <property type="component" value="Chromosome"/>
</dbReference>
<dbReference type="GO" id="GO:0008661">
    <property type="term" value="F:1-deoxy-D-xylulose-5-phosphate synthase activity"/>
    <property type="evidence" value="ECO:0007669"/>
    <property type="project" value="UniProtKB-UniRule"/>
</dbReference>
<dbReference type="GO" id="GO:0000287">
    <property type="term" value="F:magnesium ion binding"/>
    <property type="evidence" value="ECO:0007669"/>
    <property type="project" value="UniProtKB-UniRule"/>
</dbReference>
<dbReference type="GO" id="GO:0030976">
    <property type="term" value="F:thiamine pyrophosphate binding"/>
    <property type="evidence" value="ECO:0007669"/>
    <property type="project" value="UniProtKB-UniRule"/>
</dbReference>
<dbReference type="GO" id="GO:0052865">
    <property type="term" value="P:1-deoxy-D-xylulose 5-phosphate biosynthetic process"/>
    <property type="evidence" value="ECO:0007669"/>
    <property type="project" value="UniProtKB-UniPathway"/>
</dbReference>
<dbReference type="GO" id="GO:0019682">
    <property type="term" value="P:glyceraldehyde-3-phosphate metabolic process"/>
    <property type="evidence" value="ECO:0007669"/>
    <property type="project" value="UniProtKB-ARBA"/>
</dbReference>
<dbReference type="GO" id="GO:0016114">
    <property type="term" value="P:terpenoid biosynthetic process"/>
    <property type="evidence" value="ECO:0007669"/>
    <property type="project" value="UniProtKB-UniRule"/>
</dbReference>
<dbReference type="GO" id="GO:0009228">
    <property type="term" value="P:thiamine biosynthetic process"/>
    <property type="evidence" value="ECO:0007669"/>
    <property type="project" value="UniProtKB-UniRule"/>
</dbReference>
<dbReference type="CDD" id="cd02007">
    <property type="entry name" value="TPP_DXS"/>
    <property type="match status" value="1"/>
</dbReference>
<dbReference type="CDD" id="cd07033">
    <property type="entry name" value="TPP_PYR_DXS_TK_like"/>
    <property type="match status" value="1"/>
</dbReference>
<dbReference type="FunFam" id="3.40.50.920:FF:000002">
    <property type="entry name" value="1-deoxy-D-xylulose-5-phosphate synthase"/>
    <property type="match status" value="1"/>
</dbReference>
<dbReference type="FunFam" id="3.40.50.970:FF:000005">
    <property type="entry name" value="1-deoxy-D-xylulose-5-phosphate synthase"/>
    <property type="match status" value="1"/>
</dbReference>
<dbReference type="Gene3D" id="3.40.50.920">
    <property type="match status" value="1"/>
</dbReference>
<dbReference type="Gene3D" id="3.40.50.970">
    <property type="match status" value="2"/>
</dbReference>
<dbReference type="HAMAP" id="MF_00315">
    <property type="entry name" value="DXP_synth"/>
    <property type="match status" value="1"/>
</dbReference>
<dbReference type="InterPro" id="IPR005477">
    <property type="entry name" value="Dxylulose-5-P_synthase"/>
</dbReference>
<dbReference type="InterPro" id="IPR029061">
    <property type="entry name" value="THDP-binding"/>
</dbReference>
<dbReference type="InterPro" id="IPR009014">
    <property type="entry name" value="Transketo_C/PFOR_II"/>
</dbReference>
<dbReference type="InterPro" id="IPR005475">
    <property type="entry name" value="Transketolase-like_Pyr-bd"/>
</dbReference>
<dbReference type="InterPro" id="IPR033248">
    <property type="entry name" value="Transketolase_C"/>
</dbReference>
<dbReference type="InterPro" id="IPR049557">
    <property type="entry name" value="Transketolase_CS"/>
</dbReference>
<dbReference type="NCBIfam" id="TIGR00204">
    <property type="entry name" value="dxs"/>
    <property type="match status" value="1"/>
</dbReference>
<dbReference type="NCBIfam" id="NF003933">
    <property type="entry name" value="PRK05444.2-2"/>
    <property type="match status" value="1"/>
</dbReference>
<dbReference type="PANTHER" id="PTHR43322">
    <property type="entry name" value="1-D-DEOXYXYLULOSE 5-PHOSPHATE SYNTHASE-RELATED"/>
    <property type="match status" value="1"/>
</dbReference>
<dbReference type="PANTHER" id="PTHR43322:SF5">
    <property type="entry name" value="1-DEOXY-D-XYLULOSE-5-PHOSPHATE SYNTHASE, CHLOROPLASTIC"/>
    <property type="match status" value="1"/>
</dbReference>
<dbReference type="Pfam" id="PF13292">
    <property type="entry name" value="DXP_synthase_N"/>
    <property type="match status" value="1"/>
</dbReference>
<dbReference type="Pfam" id="PF02779">
    <property type="entry name" value="Transket_pyr"/>
    <property type="match status" value="1"/>
</dbReference>
<dbReference type="Pfam" id="PF02780">
    <property type="entry name" value="Transketolase_C"/>
    <property type="match status" value="1"/>
</dbReference>
<dbReference type="SMART" id="SM00861">
    <property type="entry name" value="Transket_pyr"/>
    <property type="match status" value="1"/>
</dbReference>
<dbReference type="SUPFAM" id="SSF52518">
    <property type="entry name" value="Thiamin diphosphate-binding fold (THDP-binding)"/>
    <property type="match status" value="2"/>
</dbReference>
<dbReference type="SUPFAM" id="SSF52922">
    <property type="entry name" value="TK C-terminal domain-like"/>
    <property type="match status" value="1"/>
</dbReference>
<dbReference type="PROSITE" id="PS00801">
    <property type="entry name" value="TRANSKETOLASE_1"/>
    <property type="match status" value="1"/>
</dbReference>
<evidence type="ECO:0000255" key="1">
    <source>
        <dbReference type="HAMAP-Rule" id="MF_00315"/>
    </source>
</evidence>
<feature type="chain" id="PRO_1000019024" description="1-deoxy-D-xylulose-5-phosphate synthase">
    <location>
        <begin position="1"/>
        <end position="640"/>
    </location>
</feature>
<feature type="binding site" evidence="1">
    <location>
        <position position="79"/>
    </location>
    <ligand>
        <name>thiamine diphosphate</name>
        <dbReference type="ChEBI" id="CHEBI:58937"/>
    </ligand>
</feature>
<feature type="binding site" evidence="1">
    <location>
        <begin position="120"/>
        <end position="122"/>
    </location>
    <ligand>
        <name>thiamine diphosphate</name>
        <dbReference type="ChEBI" id="CHEBI:58937"/>
    </ligand>
</feature>
<feature type="binding site" evidence="1">
    <location>
        <position position="151"/>
    </location>
    <ligand>
        <name>Mg(2+)</name>
        <dbReference type="ChEBI" id="CHEBI:18420"/>
    </ligand>
</feature>
<feature type="binding site" evidence="1">
    <location>
        <begin position="152"/>
        <end position="153"/>
    </location>
    <ligand>
        <name>thiamine diphosphate</name>
        <dbReference type="ChEBI" id="CHEBI:58937"/>
    </ligand>
</feature>
<feature type="binding site" evidence="1">
    <location>
        <position position="180"/>
    </location>
    <ligand>
        <name>Mg(2+)</name>
        <dbReference type="ChEBI" id="CHEBI:18420"/>
    </ligand>
</feature>
<feature type="binding site" evidence="1">
    <location>
        <position position="180"/>
    </location>
    <ligand>
        <name>thiamine diphosphate</name>
        <dbReference type="ChEBI" id="CHEBI:58937"/>
    </ligand>
</feature>
<feature type="binding site" evidence="1">
    <location>
        <position position="289"/>
    </location>
    <ligand>
        <name>thiamine diphosphate</name>
        <dbReference type="ChEBI" id="CHEBI:58937"/>
    </ligand>
</feature>
<feature type="binding site" evidence="1">
    <location>
        <position position="371"/>
    </location>
    <ligand>
        <name>thiamine diphosphate</name>
        <dbReference type="ChEBI" id="CHEBI:58937"/>
    </ligand>
</feature>
<name>DXS_ERYLH</name>
<accession>Q2N6U5</accession>
<keyword id="KW-0414">Isoprene biosynthesis</keyword>
<keyword id="KW-0460">Magnesium</keyword>
<keyword id="KW-0479">Metal-binding</keyword>
<keyword id="KW-1185">Reference proteome</keyword>
<keyword id="KW-0784">Thiamine biosynthesis</keyword>
<keyword id="KW-0786">Thiamine pyrophosphate</keyword>
<keyword id="KW-0808">Transferase</keyword>
<comment type="function">
    <text evidence="1">Catalyzes the acyloin condensation reaction between C atoms 2 and 3 of pyruvate and glyceraldehyde 3-phosphate to yield 1-deoxy-D-xylulose-5-phosphate (DXP).</text>
</comment>
<comment type="catalytic activity">
    <reaction evidence="1">
        <text>D-glyceraldehyde 3-phosphate + pyruvate + H(+) = 1-deoxy-D-xylulose 5-phosphate + CO2</text>
        <dbReference type="Rhea" id="RHEA:12605"/>
        <dbReference type="ChEBI" id="CHEBI:15361"/>
        <dbReference type="ChEBI" id="CHEBI:15378"/>
        <dbReference type="ChEBI" id="CHEBI:16526"/>
        <dbReference type="ChEBI" id="CHEBI:57792"/>
        <dbReference type="ChEBI" id="CHEBI:59776"/>
        <dbReference type="EC" id="2.2.1.7"/>
    </reaction>
</comment>
<comment type="cofactor">
    <cofactor evidence="1">
        <name>Mg(2+)</name>
        <dbReference type="ChEBI" id="CHEBI:18420"/>
    </cofactor>
    <text evidence="1">Binds 1 Mg(2+) ion per subunit.</text>
</comment>
<comment type="cofactor">
    <cofactor evidence="1">
        <name>thiamine diphosphate</name>
        <dbReference type="ChEBI" id="CHEBI:58937"/>
    </cofactor>
    <text evidence="1">Binds 1 thiamine pyrophosphate per subunit.</text>
</comment>
<comment type="pathway">
    <text evidence="1">Metabolic intermediate biosynthesis; 1-deoxy-D-xylulose 5-phosphate biosynthesis; 1-deoxy-D-xylulose 5-phosphate from D-glyceraldehyde 3-phosphate and pyruvate: step 1/1.</text>
</comment>
<comment type="subunit">
    <text evidence="1">Homodimer.</text>
</comment>
<comment type="similarity">
    <text evidence="1">Belongs to the transketolase family. DXPS subfamily.</text>
</comment>
<organism>
    <name type="scientific">Erythrobacter litoralis (strain HTCC2594)</name>
    <dbReference type="NCBI Taxonomy" id="314225"/>
    <lineage>
        <taxon>Bacteria</taxon>
        <taxon>Pseudomonadati</taxon>
        <taxon>Pseudomonadota</taxon>
        <taxon>Alphaproteobacteria</taxon>
        <taxon>Sphingomonadales</taxon>
        <taxon>Erythrobacteraceae</taxon>
        <taxon>Erythrobacter/Porphyrobacter group</taxon>
        <taxon>Erythrobacter</taxon>
    </lineage>
</organism>